<geneLocation type="chloroplast"/>
<name>ACCD_LACSA</name>
<sequence length="508" mass="57502">MKRWWFNSMLFKKEFEHRCRLSKSMGSLGPIENASESKDPNRNDTDKNIQGWGGHDNYSNVDLFFGVKDIRNFFSDDTFLVKDSNGDSYSIYFDIENHIFEIANDHPFCSELESSFYRNSSDLNNGSKSKNPDHDRYMDDTQYTWNNHINSCIDSYLQYQICIDNYIVSGNDNSSNNNSSNENSSNENSSNENSSNENSSNDYISSSISSQSENSSQNEDITTSDQTIPESSTHMGVTQQYRHLWVQCENCYGLNYKKFFKSKMHLCEQCGYHLKMSSSDRIELLIDPGTWEPMDEDMVSLDPIEFHSEEEPYKNRIDSYQRNTGLTEAVQTGRGQLNGITVAIGVMDFQFMGGSMGSVVGEKITRLIEYATKEFLPLIIVCASGGARMQEGSVSLMQMAKISSALYDYQSNKKLFYVPILTSPTTGGVTASFGMLGDIIIAEPNAYIAFAGKRVIEQTLNKTVPEGSQAAEYLFQKGLFDLIVPRNPLKSVLSELFQLHTFFPLNQN</sequence>
<organism>
    <name type="scientific">Lactuca sativa</name>
    <name type="common">Garden lettuce</name>
    <dbReference type="NCBI Taxonomy" id="4236"/>
    <lineage>
        <taxon>Eukaryota</taxon>
        <taxon>Viridiplantae</taxon>
        <taxon>Streptophyta</taxon>
        <taxon>Embryophyta</taxon>
        <taxon>Tracheophyta</taxon>
        <taxon>Spermatophyta</taxon>
        <taxon>Magnoliopsida</taxon>
        <taxon>eudicotyledons</taxon>
        <taxon>Gunneridae</taxon>
        <taxon>Pentapetalae</taxon>
        <taxon>asterids</taxon>
        <taxon>campanulids</taxon>
        <taxon>Asterales</taxon>
        <taxon>Asteraceae</taxon>
        <taxon>Cichorioideae</taxon>
        <taxon>Cichorieae</taxon>
        <taxon>Lactucinae</taxon>
        <taxon>Lactuca</taxon>
    </lineage>
</organism>
<protein>
    <recommendedName>
        <fullName evidence="2">Acetyl-coenzyme A carboxylase carboxyl transferase subunit beta, chloroplastic</fullName>
        <shortName evidence="2">ACCase subunit beta</shortName>
        <shortName evidence="2">Acetyl-CoA carboxylase carboxyltransferase subunit beta</shortName>
        <ecNumber evidence="2">2.1.3.15</ecNumber>
    </recommendedName>
</protein>
<comment type="function">
    <text evidence="2">Component of the acetyl coenzyme A carboxylase (ACC) complex. Biotin carboxylase (BC) catalyzes the carboxylation of biotin on its carrier protein (BCCP) and then the CO(2) group is transferred by the transcarboxylase to acetyl-CoA to form malonyl-CoA.</text>
</comment>
<comment type="catalytic activity">
    <reaction evidence="2">
        <text>N(6)-carboxybiotinyl-L-lysyl-[protein] + acetyl-CoA = N(6)-biotinyl-L-lysyl-[protein] + malonyl-CoA</text>
        <dbReference type="Rhea" id="RHEA:54728"/>
        <dbReference type="Rhea" id="RHEA-COMP:10505"/>
        <dbReference type="Rhea" id="RHEA-COMP:10506"/>
        <dbReference type="ChEBI" id="CHEBI:57288"/>
        <dbReference type="ChEBI" id="CHEBI:57384"/>
        <dbReference type="ChEBI" id="CHEBI:83144"/>
        <dbReference type="ChEBI" id="CHEBI:83145"/>
        <dbReference type="EC" id="2.1.3.15"/>
    </reaction>
</comment>
<comment type="cofactor">
    <cofactor evidence="2">
        <name>Zn(2+)</name>
        <dbReference type="ChEBI" id="CHEBI:29105"/>
    </cofactor>
    <text evidence="2">Binds 1 zinc ion per subunit.</text>
</comment>
<comment type="pathway">
    <text evidence="2">Lipid metabolism; malonyl-CoA biosynthesis; malonyl-CoA from acetyl-CoA: step 1/1.</text>
</comment>
<comment type="subunit">
    <text evidence="1">Acetyl-CoA carboxylase is a heterohexamer composed of biotin carboxyl carrier protein, biotin carboxylase and 2 subunits each of ACCase subunit alpha and ACCase plastid-coded subunit beta (accD).</text>
</comment>
<comment type="subcellular location">
    <subcellularLocation>
        <location evidence="2">Plastid</location>
        <location evidence="2">Chloroplast stroma</location>
    </subcellularLocation>
</comment>
<comment type="similarity">
    <text evidence="2">Belongs to the AccD/PCCB family.</text>
</comment>
<comment type="sequence caution" evidence="5">
    <conflict type="erroneous initiation">
        <sequence resource="EMBL-CDS" id="ABD47242"/>
    </conflict>
    <text>Extended N-terminus.</text>
</comment>
<comment type="sequence caution" evidence="5">
    <conflict type="erroneous initiation">
        <sequence resource="EMBL-CDS" id="BAE47603"/>
    </conflict>
    <text>Extended N-terminus.</text>
</comment>
<reference key="1">
    <citation type="submission" date="2004-08" db="EMBL/GenBank/DDBJ databases">
        <title>The complete genome sequence of the Lactuca sativa (lettuce) chloroplast.</title>
        <authorList>
            <person name="Kanamoto H."/>
            <person name="Yamashita A."/>
            <person name="Okumura S."/>
            <person name="Hattori M."/>
            <person name="Tomizawa K."/>
        </authorList>
    </citation>
    <scope>NUCLEOTIDE SEQUENCE [LARGE SCALE GENOMIC DNA]</scope>
</reference>
<reference key="2">
    <citation type="submission" date="2006-01" db="EMBL/GenBank/DDBJ databases">
        <title>A comparison of the first two published chloroplast genomes in Asteraceae: Lactuca and Helianthus.</title>
        <authorList>
            <person name="Timme R.E."/>
            <person name="Kuehl J.V."/>
            <person name="Boore J.L."/>
            <person name="Jansen R.K."/>
        </authorList>
    </citation>
    <scope>NUCLEOTIDE SEQUENCE [LARGE SCALE GENOMIC DNA]</scope>
</reference>
<dbReference type="EC" id="2.1.3.15" evidence="2"/>
<dbReference type="EMBL" id="DQ383816">
    <property type="protein sequence ID" value="ABD47242.1"/>
    <property type="status" value="ALT_INIT"/>
    <property type="molecule type" value="Genomic_DNA"/>
</dbReference>
<dbReference type="EMBL" id="AP007232">
    <property type="protein sequence ID" value="BAE47603.1"/>
    <property type="status" value="ALT_INIT"/>
    <property type="molecule type" value="Genomic_DNA"/>
</dbReference>
<dbReference type="RefSeq" id="YP_398338.1">
    <property type="nucleotide sequence ID" value="NC_007578.1"/>
</dbReference>
<dbReference type="SMR" id="Q332W9"/>
<dbReference type="GeneID" id="3772810"/>
<dbReference type="KEGG" id="lsv:3772810"/>
<dbReference type="OrthoDB" id="10053020at2759"/>
<dbReference type="UniPathway" id="UPA00655">
    <property type="reaction ID" value="UER00711"/>
</dbReference>
<dbReference type="GO" id="GO:0009317">
    <property type="term" value="C:acetyl-CoA carboxylase complex"/>
    <property type="evidence" value="ECO:0007669"/>
    <property type="project" value="InterPro"/>
</dbReference>
<dbReference type="GO" id="GO:0009570">
    <property type="term" value="C:chloroplast stroma"/>
    <property type="evidence" value="ECO:0007669"/>
    <property type="project" value="UniProtKB-SubCell"/>
</dbReference>
<dbReference type="GO" id="GO:0003989">
    <property type="term" value="F:acetyl-CoA carboxylase activity"/>
    <property type="evidence" value="ECO:0007669"/>
    <property type="project" value="InterPro"/>
</dbReference>
<dbReference type="GO" id="GO:0005524">
    <property type="term" value="F:ATP binding"/>
    <property type="evidence" value="ECO:0007669"/>
    <property type="project" value="UniProtKB-KW"/>
</dbReference>
<dbReference type="GO" id="GO:0016743">
    <property type="term" value="F:carboxyl- or carbamoyltransferase activity"/>
    <property type="evidence" value="ECO:0007669"/>
    <property type="project" value="UniProtKB-UniRule"/>
</dbReference>
<dbReference type="GO" id="GO:0008270">
    <property type="term" value="F:zinc ion binding"/>
    <property type="evidence" value="ECO:0007669"/>
    <property type="project" value="UniProtKB-UniRule"/>
</dbReference>
<dbReference type="GO" id="GO:0006633">
    <property type="term" value="P:fatty acid biosynthetic process"/>
    <property type="evidence" value="ECO:0007669"/>
    <property type="project" value="UniProtKB-KW"/>
</dbReference>
<dbReference type="GO" id="GO:2001295">
    <property type="term" value="P:malonyl-CoA biosynthetic process"/>
    <property type="evidence" value="ECO:0007669"/>
    <property type="project" value="UniProtKB-UniRule"/>
</dbReference>
<dbReference type="Gene3D" id="3.90.226.10">
    <property type="entry name" value="2-enoyl-CoA Hydratase, Chain A, domain 1"/>
    <property type="match status" value="1"/>
</dbReference>
<dbReference type="HAMAP" id="MF_01395">
    <property type="entry name" value="AcetylCoA_CT_beta"/>
    <property type="match status" value="1"/>
</dbReference>
<dbReference type="InterPro" id="IPR034733">
    <property type="entry name" value="AcCoA_carboxyl_beta"/>
</dbReference>
<dbReference type="InterPro" id="IPR000438">
    <property type="entry name" value="Acetyl_CoA_COase_Trfase_b_su"/>
</dbReference>
<dbReference type="InterPro" id="IPR029045">
    <property type="entry name" value="ClpP/crotonase-like_dom_sf"/>
</dbReference>
<dbReference type="InterPro" id="IPR011762">
    <property type="entry name" value="COA_CT_N"/>
</dbReference>
<dbReference type="NCBIfam" id="TIGR00515">
    <property type="entry name" value="accD"/>
    <property type="match status" value="1"/>
</dbReference>
<dbReference type="PANTHER" id="PTHR42995">
    <property type="entry name" value="ACETYL-COENZYME A CARBOXYLASE CARBOXYL TRANSFERASE SUBUNIT BETA, CHLOROPLASTIC"/>
    <property type="match status" value="1"/>
</dbReference>
<dbReference type="PANTHER" id="PTHR42995:SF5">
    <property type="entry name" value="ACETYL-COENZYME A CARBOXYLASE CARBOXYL TRANSFERASE SUBUNIT BETA, CHLOROPLASTIC"/>
    <property type="match status" value="1"/>
</dbReference>
<dbReference type="Pfam" id="PF01039">
    <property type="entry name" value="Carboxyl_trans"/>
    <property type="match status" value="1"/>
</dbReference>
<dbReference type="PRINTS" id="PR01070">
    <property type="entry name" value="ACCCTRFRASEB"/>
</dbReference>
<dbReference type="SUPFAM" id="SSF52096">
    <property type="entry name" value="ClpP/crotonase"/>
    <property type="match status" value="1"/>
</dbReference>
<dbReference type="PROSITE" id="PS50980">
    <property type="entry name" value="COA_CT_NTER"/>
    <property type="match status" value="1"/>
</dbReference>
<evidence type="ECO:0000250" key="1"/>
<evidence type="ECO:0000255" key="2">
    <source>
        <dbReference type="HAMAP-Rule" id="MF_01395"/>
    </source>
</evidence>
<evidence type="ECO:0000255" key="3">
    <source>
        <dbReference type="PROSITE-ProRule" id="PRU01136"/>
    </source>
</evidence>
<evidence type="ECO:0000256" key="4">
    <source>
        <dbReference type="SAM" id="MobiDB-lite"/>
    </source>
</evidence>
<evidence type="ECO:0000305" key="5"/>
<gene>
    <name evidence="2" type="primary">accD</name>
</gene>
<keyword id="KW-0067">ATP-binding</keyword>
<keyword id="KW-0150">Chloroplast</keyword>
<keyword id="KW-0275">Fatty acid biosynthesis</keyword>
<keyword id="KW-0276">Fatty acid metabolism</keyword>
<keyword id="KW-0444">Lipid biosynthesis</keyword>
<keyword id="KW-0443">Lipid metabolism</keyword>
<keyword id="KW-0479">Metal-binding</keyword>
<keyword id="KW-0547">Nucleotide-binding</keyword>
<keyword id="KW-0934">Plastid</keyword>
<keyword id="KW-0808">Transferase</keyword>
<keyword id="KW-0862">Zinc</keyword>
<keyword id="KW-0863">Zinc-finger</keyword>
<accession>Q332W9</accession>
<proteinExistence type="inferred from homology"/>
<feature type="chain" id="PRO_0000359146" description="Acetyl-coenzyme A carboxylase carboxyl transferase subunit beta, chloroplastic">
    <location>
        <begin position="1"/>
        <end position="508"/>
    </location>
</feature>
<feature type="domain" description="CoA carboxyltransferase N-terminal" evidence="3">
    <location>
        <begin position="244"/>
        <end position="508"/>
    </location>
</feature>
<feature type="zinc finger region" description="C4-type" evidence="2">
    <location>
        <begin position="248"/>
        <end position="270"/>
    </location>
</feature>
<feature type="region of interest" description="Disordered" evidence="4">
    <location>
        <begin position="30"/>
        <end position="51"/>
    </location>
</feature>
<feature type="region of interest" description="Disordered" evidence="4">
    <location>
        <begin position="173"/>
        <end position="234"/>
    </location>
</feature>
<feature type="compositionally biased region" description="Basic and acidic residues" evidence="4">
    <location>
        <begin position="35"/>
        <end position="47"/>
    </location>
</feature>
<feature type="compositionally biased region" description="Low complexity" evidence="4">
    <location>
        <begin position="173"/>
        <end position="219"/>
    </location>
</feature>
<feature type="compositionally biased region" description="Polar residues" evidence="4">
    <location>
        <begin position="220"/>
        <end position="234"/>
    </location>
</feature>
<feature type="binding site" evidence="2">
    <location>
        <position position="248"/>
    </location>
    <ligand>
        <name>Zn(2+)</name>
        <dbReference type="ChEBI" id="CHEBI:29105"/>
    </ligand>
</feature>
<feature type="binding site" evidence="2">
    <location>
        <position position="251"/>
    </location>
    <ligand>
        <name>Zn(2+)</name>
        <dbReference type="ChEBI" id="CHEBI:29105"/>
    </ligand>
</feature>
<feature type="binding site" evidence="2">
    <location>
        <position position="267"/>
    </location>
    <ligand>
        <name>Zn(2+)</name>
        <dbReference type="ChEBI" id="CHEBI:29105"/>
    </ligand>
</feature>
<feature type="binding site" evidence="2">
    <location>
        <position position="270"/>
    </location>
    <ligand>
        <name>Zn(2+)</name>
        <dbReference type="ChEBI" id="CHEBI:29105"/>
    </ligand>
</feature>